<keyword id="KW-0687">Ribonucleoprotein</keyword>
<keyword id="KW-0689">Ribosomal protein</keyword>
<reference key="1">
    <citation type="journal article" date="2008" name="J. Bacteriol.">
        <title>The complete genome sequence of Thermococcus onnurineus NA1 reveals a mixed heterotrophic and carboxydotrophic metabolism.</title>
        <authorList>
            <person name="Lee H.S."/>
            <person name="Kang S.G."/>
            <person name="Bae S.S."/>
            <person name="Lim J.K."/>
            <person name="Cho Y."/>
            <person name="Kim Y.J."/>
            <person name="Jeon J.H."/>
            <person name="Cha S.-S."/>
            <person name="Kwon K.K."/>
            <person name="Kim H.-T."/>
            <person name="Park C.-J."/>
            <person name="Lee H.-W."/>
            <person name="Kim S.I."/>
            <person name="Chun J."/>
            <person name="Colwell R.R."/>
            <person name="Kim S.-J."/>
            <person name="Lee J.-H."/>
        </authorList>
    </citation>
    <scope>NUCLEOTIDE SEQUENCE [LARGE SCALE GENOMIC DNA]</scope>
    <source>
        <strain>NA1</strain>
    </source>
</reference>
<organism>
    <name type="scientific">Thermococcus onnurineus (strain NA1)</name>
    <dbReference type="NCBI Taxonomy" id="523850"/>
    <lineage>
        <taxon>Archaea</taxon>
        <taxon>Methanobacteriati</taxon>
        <taxon>Methanobacteriota</taxon>
        <taxon>Thermococci</taxon>
        <taxon>Thermococcales</taxon>
        <taxon>Thermococcaceae</taxon>
        <taxon>Thermococcus</taxon>
    </lineage>
</organism>
<accession>B6YXA5</accession>
<proteinExistence type="inferred from homology"/>
<sequence length="67" mass="8018">MGNIRQTFIKRVARELFDRYPDQFTKDFEHNKKKVGELTNVTSKTIRNRIAGYITRLVRMKEEGKML</sequence>
<comment type="similarity">
    <text evidence="1">Belongs to the eukaryotic ribosomal protein eS17 family.</text>
</comment>
<protein>
    <recommendedName>
        <fullName evidence="1">Small ribosomal subunit protein eS17</fullName>
    </recommendedName>
    <alternativeName>
        <fullName evidence="2">30S ribosomal protein S17e</fullName>
    </alternativeName>
</protein>
<name>RS17E_THEON</name>
<gene>
    <name evidence="1" type="primary">rps17e</name>
    <name type="ordered locus">TON_1230</name>
</gene>
<feature type="chain" id="PRO_1000127261" description="Small ribosomal subunit protein eS17">
    <location>
        <begin position="1"/>
        <end position="67"/>
    </location>
</feature>
<dbReference type="EMBL" id="CP000855">
    <property type="protein sequence ID" value="ACJ16718.1"/>
    <property type="molecule type" value="Genomic_DNA"/>
</dbReference>
<dbReference type="RefSeq" id="WP_012572190.1">
    <property type="nucleotide sequence ID" value="NC_011529.1"/>
</dbReference>
<dbReference type="SMR" id="B6YXA5"/>
<dbReference type="STRING" id="523850.TON_1230"/>
<dbReference type="GeneID" id="7018253"/>
<dbReference type="KEGG" id="ton:TON_1230"/>
<dbReference type="PATRIC" id="fig|523850.10.peg.1237"/>
<dbReference type="eggNOG" id="arCOG01885">
    <property type="taxonomic scope" value="Archaea"/>
</dbReference>
<dbReference type="HOGENOM" id="CLU_176720_1_0_2"/>
<dbReference type="OrthoDB" id="52479at2157"/>
<dbReference type="Proteomes" id="UP000002727">
    <property type="component" value="Chromosome"/>
</dbReference>
<dbReference type="GO" id="GO:0005829">
    <property type="term" value="C:cytosol"/>
    <property type="evidence" value="ECO:0007669"/>
    <property type="project" value="UniProtKB-ARBA"/>
</dbReference>
<dbReference type="GO" id="GO:1990904">
    <property type="term" value="C:ribonucleoprotein complex"/>
    <property type="evidence" value="ECO:0007669"/>
    <property type="project" value="UniProtKB-KW"/>
</dbReference>
<dbReference type="GO" id="GO:0005840">
    <property type="term" value="C:ribosome"/>
    <property type="evidence" value="ECO:0007669"/>
    <property type="project" value="UniProtKB-KW"/>
</dbReference>
<dbReference type="GO" id="GO:0003735">
    <property type="term" value="F:structural constituent of ribosome"/>
    <property type="evidence" value="ECO:0007669"/>
    <property type="project" value="InterPro"/>
</dbReference>
<dbReference type="GO" id="GO:0006412">
    <property type="term" value="P:translation"/>
    <property type="evidence" value="ECO:0007669"/>
    <property type="project" value="UniProtKB-UniRule"/>
</dbReference>
<dbReference type="Gene3D" id="1.10.60.20">
    <property type="entry name" value="Ribosomal protein S17e-like"/>
    <property type="match status" value="1"/>
</dbReference>
<dbReference type="HAMAP" id="MF_00511">
    <property type="entry name" value="Ribosomal_eS17"/>
    <property type="match status" value="1"/>
</dbReference>
<dbReference type="InterPro" id="IPR001210">
    <property type="entry name" value="Ribosomal_eS17"/>
</dbReference>
<dbReference type="InterPro" id="IPR018273">
    <property type="entry name" value="Ribosomal_eS17_CS"/>
</dbReference>
<dbReference type="InterPro" id="IPR036401">
    <property type="entry name" value="Ribosomal_eS17_sf"/>
</dbReference>
<dbReference type="NCBIfam" id="NF002242">
    <property type="entry name" value="PRK01151.1"/>
    <property type="match status" value="1"/>
</dbReference>
<dbReference type="PANTHER" id="PTHR10732">
    <property type="entry name" value="40S RIBOSOMAL PROTEIN S17"/>
    <property type="match status" value="1"/>
</dbReference>
<dbReference type="PANTHER" id="PTHR10732:SF0">
    <property type="entry name" value="40S RIBOSOMAL PROTEIN S17"/>
    <property type="match status" value="1"/>
</dbReference>
<dbReference type="Pfam" id="PF00833">
    <property type="entry name" value="Ribosomal_S17e"/>
    <property type="match status" value="1"/>
</dbReference>
<dbReference type="SUPFAM" id="SSF116820">
    <property type="entry name" value="Rps17e-like"/>
    <property type="match status" value="1"/>
</dbReference>
<dbReference type="PROSITE" id="PS00712">
    <property type="entry name" value="RIBOSOMAL_S17E"/>
    <property type="match status" value="1"/>
</dbReference>
<evidence type="ECO:0000255" key="1">
    <source>
        <dbReference type="HAMAP-Rule" id="MF_00511"/>
    </source>
</evidence>
<evidence type="ECO:0000305" key="2"/>